<name>TMCAL_STAS1</name>
<protein>
    <recommendedName>
        <fullName evidence="1">tRNA(Met) cytidine acetate ligase</fullName>
        <ecNumber evidence="1">6.3.4.-</ecNumber>
    </recommendedName>
</protein>
<gene>
    <name evidence="1" type="primary">tmcAL</name>
    <name type="ordered locus">SSP1662</name>
</gene>
<reference key="1">
    <citation type="journal article" date="2005" name="Proc. Natl. Acad. Sci. U.S.A.">
        <title>Whole genome sequence of Staphylococcus saprophyticus reveals the pathogenesis of uncomplicated urinary tract infection.</title>
        <authorList>
            <person name="Kuroda M."/>
            <person name="Yamashita A."/>
            <person name="Hirakawa H."/>
            <person name="Kumano M."/>
            <person name="Morikawa K."/>
            <person name="Higashide M."/>
            <person name="Maruyama A."/>
            <person name="Inose Y."/>
            <person name="Matoba K."/>
            <person name="Toh H."/>
            <person name="Kuhara S."/>
            <person name="Hattori M."/>
            <person name="Ohta T."/>
        </authorList>
    </citation>
    <scope>NUCLEOTIDE SEQUENCE [LARGE SCALE GENOMIC DNA]</scope>
    <source>
        <strain>ATCC 15305 / DSM 20229 / NCIMB 8711 / NCTC 7292 / S-41</strain>
    </source>
</reference>
<feature type="chain" id="PRO_0000300191" description="tRNA(Met) cytidine acetate ligase">
    <location>
        <begin position="1"/>
        <end position="377"/>
    </location>
</feature>
<feature type="binding site" evidence="1">
    <location>
        <begin position="7"/>
        <end position="20"/>
    </location>
    <ligand>
        <name>ATP</name>
        <dbReference type="ChEBI" id="CHEBI:30616"/>
    </ligand>
</feature>
<feature type="binding site" evidence="1">
    <location>
        <position position="100"/>
    </location>
    <ligand>
        <name>ATP</name>
        <dbReference type="ChEBI" id="CHEBI:30616"/>
    </ligand>
</feature>
<feature type="binding site" evidence="1">
    <location>
        <position position="153"/>
    </location>
    <ligand>
        <name>ATP</name>
        <dbReference type="ChEBI" id="CHEBI:30616"/>
    </ligand>
</feature>
<feature type="binding site" evidence="1">
    <location>
        <position position="178"/>
    </location>
    <ligand>
        <name>ATP</name>
        <dbReference type="ChEBI" id="CHEBI:30616"/>
    </ligand>
</feature>
<dbReference type="EC" id="6.3.4.-" evidence="1"/>
<dbReference type="EMBL" id="AP008934">
    <property type="protein sequence ID" value="BAE18807.1"/>
    <property type="molecule type" value="Genomic_DNA"/>
</dbReference>
<dbReference type="RefSeq" id="WP_011303392.1">
    <property type="nucleotide sequence ID" value="NZ_MTGA01000039.1"/>
</dbReference>
<dbReference type="SMR" id="Q49WQ0"/>
<dbReference type="GeneID" id="3615152"/>
<dbReference type="KEGG" id="ssp:SSP1662"/>
<dbReference type="PATRIC" id="fig|342451.11.peg.1661"/>
<dbReference type="eggNOG" id="COG1323">
    <property type="taxonomic scope" value="Bacteria"/>
</dbReference>
<dbReference type="HOGENOM" id="CLU_038915_0_2_9"/>
<dbReference type="OrthoDB" id="9769796at2"/>
<dbReference type="Proteomes" id="UP000006371">
    <property type="component" value="Chromosome"/>
</dbReference>
<dbReference type="GO" id="GO:0005737">
    <property type="term" value="C:cytoplasm"/>
    <property type="evidence" value="ECO:0007669"/>
    <property type="project" value="UniProtKB-SubCell"/>
</dbReference>
<dbReference type="GO" id="GO:0005524">
    <property type="term" value="F:ATP binding"/>
    <property type="evidence" value="ECO:0007669"/>
    <property type="project" value="UniProtKB-KW"/>
</dbReference>
<dbReference type="GO" id="GO:0016879">
    <property type="term" value="F:ligase activity, forming carbon-nitrogen bonds"/>
    <property type="evidence" value="ECO:0007669"/>
    <property type="project" value="UniProtKB-UniRule"/>
</dbReference>
<dbReference type="GO" id="GO:0000049">
    <property type="term" value="F:tRNA binding"/>
    <property type="evidence" value="ECO:0007669"/>
    <property type="project" value="UniProtKB-KW"/>
</dbReference>
<dbReference type="GO" id="GO:0006400">
    <property type="term" value="P:tRNA modification"/>
    <property type="evidence" value="ECO:0007669"/>
    <property type="project" value="UniProtKB-UniRule"/>
</dbReference>
<dbReference type="Gene3D" id="3.40.50.620">
    <property type="entry name" value="HUPs"/>
    <property type="match status" value="1"/>
</dbReference>
<dbReference type="HAMAP" id="MF_01539">
    <property type="entry name" value="TmcAL"/>
    <property type="match status" value="1"/>
</dbReference>
<dbReference type="InterPro" id="IPR014729">
    <property type="entry name" value="Rossmann-like_a/b/a_fold"/>
</dbReference>
<dbReference type="InterPro" id="IPR008513">
    <property type="entry name" value="tRNA(Met)_cyd_acetate_ligase"/>
</dbReference>
<dbReference type="NCBIfam" id="NF010191">
    <property type="entry name" value="PRK13670.1"/>
    <property type="match status" value="1"/>
</dbReference>
<dbReference type="PANTHER" id="PTHR37825">
    <property type="entry name" value="TRNA(MET) CYTIDINE ACETATE LIGASE"/>
    <property type="match status" value="1"/>
</dbReference>
<dbReference type="PANTHER" id="PTHR37825:SF1">
    <property type="entry name" value="TRNA(MET) CYTIDINE ACETATE LIGASE"/>
    <property type="match status" value="1"/>
</dbReference>
<dbReference type="Pfam" id="PF05636">
    <property type="entry name" value="HIGH_NTase1"/>
    <property type="match status" value="1"/>
</dbReference>
<dbReference type="SUPFAM" id="SSF52374">
    <property type="entry name" value="Nucleotidylyl transferase"/>
    <property type="match status" value="1"/>
</dbReference>
<evidence type="ECO:0000255" key="1">
    <source>
        <dbReference type="HAMAP-Rule" id="MF_01539"/>
    </source>
</evidence>
<comment type="function">
    <text evidence="1">Catalyzes the formation of N(4)-acetylcytidine (ac(4)C) at the wobble position of elongator tRNA(Met), using acetate and ATP as substrates. First activates an acetate ion to form acetyladenylate (Ac-AMP) and then transfers the acetyl group to tRNA to form ac(4)C34.</text>
</comment>
<comment type="catalytic activity">
    <reaction evidence="1">
        <text>cytidine(34) in elongator tRNA(Met) + acetate + ATP = N(4)-acetylcytidine(34) in elongator tRNA(Met) + AMP + diphosphate</text>
        <dbReference type="Rhea" id="RHEA:58144"/>
        <dbReference type="Rhea" id="RHEA-COMP:10693"/>
        <dbReference type="Rhea" id="RHEA-COMP:10694"/>
        <dbReference type="ChEBI" id="CHEBI:30089"/>
        <dbReference type="ChEBI" id="CHEBI:30616"/>
        <dbReference type="ChEBI" id="CHEBI:33019"/>
        <dbReference type="ChEBI" id="CHEBI:74900"/>
        <dbReference type="ChEBI" id="CHEBI:82748"/>
        <dbReference type="ChEBI" id="CHEBI:456215"/>
    </reaction>
</comment>
<comment type="subcellular location">
    <subcellularLocation>
        <location evidence="1">Cytoplasm</location>
    </subcellularLocation>
</comment>
<comment type="similarity">
    <text evidence="1">Belongs to the TmcAL family.</text>
</comment>
<proteinExistence type="inferred from homology"/>
<keyword id="KW-0067">ATP-binding</keyword>
<keyword id="KW-0963">Cytoplasm</keyword>
<keyword id="KW-0436">Ligase</keyword>
<keyword id="KW-0547">Nucleotide-binding</keyword>
<keyword id="KW-1185">Reference proteome</keyword>
<keyword id="KW-0694">RNA-binding</keyword>
<keyword id="KW-0819">tRNA processing</keyword>
<keyword id="KW-0820">tRNA-binding</keyword>
<accession>Q49WQ0</accession>
<organism>
    <name type="scientific">Staphylococcus saprophyticus subsp. saprophyticus (strain ATCC 15305 / DSM 20229 / NCIMB 8711 / NCTC 7292 / S-41)</name>
    <dbReference type="NCBI Taxonomy" id="342451"/>
    <lineage>
        <taxon>Bacteria</taxon>
        <taxon>Bacillati</taxon>
        <taxon>Bacillota</taxon>
        <taxon>Bacilli</taxon>
        <taxon>Bacillales</taxon>
        <taxon>Staphylococcaceae</taxon>
        <taxon>Staphylococcus</taxon>
    </lineage>
</organism>
<sequence length="377" mass="42863">MKSVALVTEYNPFHNGHLYHAQQSKSITNSDISIAIMSGNFVMRGQPAIYNKFTRAKMALRAVDLVVELPAYASVSAGQYFAKTAVQIADYLNVSHLSFGSESGNMDDFLSLAQSIDKIEQSPLFLEKLKEGKSYPRILSELITDNDLLSSPNNTLGLSYVRAIQTYAPSIQPWTISRFQSAHHDNEISHQTFASGTSIRQSLMNQTDLWKDVVPCEIHKHYERPHISIEDTFNYLKYAILSQDATSLAQIYTMSEGIENRILQTIEQATSFEHLMTLLKTKRYTYTHIQRLLMNILLNFKKHDEPASINAVRILGMSERGQQYLKQIKKSFPERNFVTQVNKQNANLFTNEIHATKIYNLISGQTANDFNTPVIRI</sequence>